<comment type="function">
    <text evidence="1">Produces ATP from ADP in the presence of a proton gradient across the membrane.</text>
</comment>
<comment type="subunit">
    <text>F-type ATPases have 2 components, CF(1) - the catalytic core - and CF(0) - the membrane proton channel. CF(1) has five subunits: alpha(3), beta(3), gamma(1), delta(1), epsilon(1). CF(0) has three main subunits: a, b and c.</text>
</comment>
<comment type="subcellular location">
    <subcellularLocation>
        <location evidence="1">Cell membrane</location>
        <topology evidence="1">Peripheral membrane protein</topology>
    </subcellularLocation>
</comment>
<comment type="similarity">
    <text evidence="1">Belongs to the ATPase epsilon chain family.</text>
</comment>
<gene>
    <name evidence="1" type="primary">atpC</name>
    <name type="ordered locus">SH0933</name>
</gene>
<keyword id="KW-0066">ATP synthesis</keyword>
<keyword id="KW-1003">Cell membrane</keyword>
<keyword id="KW-0139">CF(1)</keyword>
<keyword id="KW-0375">Hydrogen ion transport</keyword>
<keyword id="KW-0406">Ion transport</keyword>
<keyword id="KW-0472">Membrane</keyword>
<keyword id="KW-0813">Transport</keyword>
<sequence length="133" mass="14616">MSTVNLDIVTPNGSVYEKDDVELVVFQTTAGEMGVMSGHIPTVAALKTGHVKVNFRNGTEYIAVSGGFVEIRQHKVSVIVQTAETASEIDVERAKLARQRAQSHLEDQDNSDINRAKRALARAENRLRVAELK</sequence>
<protein>
    <recommendedName>
        <fullName evidence="1">ATP synthase epsilon chain</fullName>
    </recommendedName>
    <alternativeName>
        <fullName evidence="1">ATP synthase F1 sector epsilon subunit</fullName>
    </alternativeName>
    <alternativeName>
        <fullName evidence="1">F-ATPase epsilon subunit</fullName>
    </alternativeName>
</protein>
<dbReference type="EMBL" id="AP006716">
    <property type="protein sequence ID" value="BAE04242.1"/>
    <property type="molecule type" value="Genomic_DNA"/>
</dbReference>
<dbReference type="RefSeq" id="WP_011275244.1">
    <property type="nucleotide sequence ID" value="NC_007168.1"/>
</dbReference>
<dbReference type="SMR" id="Q4L7Y3"/>
<dbReference type="KEGG" id="sha:SH0933"/>
<dbReference type="eggNOG" id="COG0355">
    <property type="taxonomic scope" value="Bacteria"/>
</dbReference>
<dbReference type="HOGENOM" id="CLU_084338_1_3_9"/>
<dbReference type="OrthoDB" id="9804110at2"/>
<dbReference type="Proteomes" id="UP000000543">
    <property type="component" value="Chromosome"/>
</dbReference>
<dbReference type="GO" id="GO:0005886">
    <property type="term" value="C:plasma membrane"/>
    <property type="evidence" value="ECO:0007669"/>
    <property type="project" value="UniProtKB-SubCell"/>
</dbReference>
<dbReference type="GO" id="GO:0045259">
    <property type="term" value="C:proton-transporting ATP synthase complex"/>
    <property type="evidence" value="ECO:0007669"/>
    <property type="project" value="UniProtKB-KW"/>
</dbReference>
<dbReference type="GO" id="GO:0005524">
    <property type="term" value="F:ATP binding"/>
    <property type="evidence" value="ECO:0007669"/>
    <property type="project" value="UniProtKB-UniRule"/>
</dbReference>
<dbReference type="GO" id="GO:0046933">
    <property type="term" value="F:proton-transporting ATP synthase activity, rotational mechanism"/>
    <property type="evidence" value="ECO:0007669"/>
    <property type="project" value="UniProtKB-UniRule"/>
</dbReference>
<dbReference type="CDD" id="cd12152">
    <property type="entry name" value="F1-ATPase_delta"/>
    <property type="match status" value="1"/>
</dbReference>
<dbReference type="FunFam" id="2.60.15.10:FF:000001">
    <property type="entry name" value="ATP synthase epsilon chain"/>
    <property type="match status" value="1"/>
</dbReference>
<dbReference type="Gene3D" id="1.20.5.440">
    <property type="entry name" value="ATP synthase delta/epsilon subunit, C-terminal domain"/>
    <property type="match status" value="1"/>
</dbReference>
<dbReference type="Gene3D" id="2.60.15.10">
    <property type="entry name" value="F0F1 ATP synthase delta/epsilon subunit, N-terminal"/>
    <property type="match status" value="1"/>
</dbReference>
<dbReference type="HAMAP" id="MF_00530">
    <property type="entry name" value="ATP_synth_epsil_bac"/>
    <property type="match status" value="1"/>
</dbReference>
<dbReference type="InterPro" id="IPR036794">
    <property type="entry name" value="ATP_F1_dsu/esu_C_sf"/>
</dbReference>
<dbReference type="InterPro" id="IPR001469">
    <property type="entry name" value="ATP_synth_F1_dsu/esu"/>
</dbReference>
<dbReference type="InterPro" id="IPR020546">
    <property type="entry name" value="ATP_synth_F1_dsu/esu_N"/>
</dbReference>
<dbReference type="InterPro" id="IPR020547">
    <property type="entry name" value="ATP_synth_F1_esu_C"/>
</dbReference>
<dbReference type="InterPro" id="IPR036771">
    <property type="entry name" value="ATPsynth_dsu/esu_N"/>
</dbReference>
<dbReference type="NCBIfam" id="TIGR01216">
    <property type="entry name" value="ATP_synt_epsi"/>
    <property type="match status" value="1"/>
</dbReference>
<dbReference type="NCBIfam" id="NF001846">
    <property type="entry name" value="PRK00571.1-3"/>
    <property type="match status" value="1"/>
</dbReference>
<dbReference type="PANTHER" id="PTHR13822">
    <property type="entry name" value="ATP SYNTHASE DELTA/EPSILON CHAIN"/>
    <property type="match status" value="1"/>
</dbReference>
<dbReference type="PANTHER" id="PTHR13822:SF10">
    <property type="entry name" value="ATP SYNTHASE EPSILON CHAIN, CHLOROPLASTIC"/>
    <property type="match status" value="1"/>
</dbReference>
<dbReference type="Pfam" id="PF00401">
    <property type="entry name" value="ATP-synt_DE"/>
    <property type="match status" value="1"/>
</dbReference>
<dbReference type="Pfam" id="PF02823">
    <property type="entry name" value="ATP-synt_DE_N"/>
    <property type="match status" value="1"/>
</dbReference>
<dbReference type="SUPFAM" id="SSF46604">
    <property type="entry name" value="Epsilon subunit of F1F0-ATP synthase C-terminal domain"/>
    <property type="match status" value="1"/>
</dbReference>
<dbReference type="SUPFAM" id="SSF51344">
    <property type="entry name" value="Epsilon subunit of F1F0-ATP synthase N-terminal domain"/>
    <property type="match status" value="1"/>
</dbReference>
<organism>
    <name type="scientific">Staphylococcus haemolyticus (strain JCSC1435)</name>
    <dbReference type="NCBI Taxonomy" id="279808"/>
    <lineage>
        <taxon>Bacteria</taxon>
        <taxon>Bacillati</taxon>
        <taxon>Bacillota</taxon>
        <taxon>Bacilli</taxon>
        <taxon>Bacillales</taxon>
        <taxon>Staphylococcaceae</taxon>
        <taxon>Staphylococcus</taxon>
    </lineage>
</organism>
<evidence type="ECO:0000255" key="1">
    <source>
        <dbReference type="HAMAP-Rule" id="MF_00530"/>
    </source>
</evidence>
<name>ATPE_STAHJ</name>
<proteinExistence type="inferred from homology"/>
<feature type="chain" id="PRO_0000188208" description="ATP synthase epsilon chain">
    <location>
        <begin position="1"/>
        <end position="133"/>
    </location>
</feature>
<reference key="1">
    <citation type="journal article" date="2005" name="J. Bacteriol.">
        <title>Whole-genome sequencing of Staphylococcus haemolyticus uncovers the extreme plasticity of its genome and the evolution of human-colonizing staphylococcal species.</title>
        <authorList>
            <person name="Takeuchi F."/>
            <person name="Watanabe S."/>
            <person name="Baba T."/>
            <person name="Yuzawa H."/>
            <person name="Ito T."/>
            <person name="Morimoto Y."/>
            <person name="Kuroda M."/>
            <person name="Cui L."/>
            <person name="Takahashi M."/>
            <person name="Ankai A."/>
            <person name="Baba S."/>
            <person name="Fukui S."/>
            <person name="Lee J.C."/>
            <person name="Hiramatsu K."/>
        </authorList>
    </citation>
    <scope>NUCLEOTIDE SEQUENCE [LARGE SCALE GENOMIC DNA]</scope>
    <source>
        <strain>JCSC1435</strain>
    </source>
</reference>
<accession>Q4L7Y3</accession>